<gene>
    <name evidence="1" type="primary">gpmB</name>
    <name type="ordered locus">YpsIP31758_3480</name>
</gene>
<protein>
    <recommendedName>
        <fullName evidence="1">Probable phosphoglycerate mutase GpmB</fullName>
        <ecNumber evidence="1">5.4.2.-</ecNumber>
    </recommendedName>
    <alternativeName>
        <fullName evidence="1">PGAM</fullName>
    </alternativeName>
    <alternativeName>
        <fullName evidence="1">Phosphoglyceromutase</fullName>
    </alternativeName>
</protein>
<accession>A7FMF8</accession>
<comment type="catalytic activity">
    <reaction evidence="1">
        <text>(2R)-2-phosphoglycerate = (2R)-3-phosphoglycerate</text>
        <dbReference type="Rhea" id="RHEA:15901"/>
        <dbReference type="ChEBI" id="CHEBI:58272"/>
        <dbReference type="ChEBI" id="CHEBI:58289"/>
    </reaction>
</comment>
<comment type="pathway">
    <text evidence="1">Carbohydrate degradation; glycolysis; pyruvate from D-glyceraldehyde 3-phosphate: step 3/5.</text>
</comment>
<comment type="similarity">
    <text evidence="1">Belongs to the phosphoglycerate mutase family. GpmB subfamily.</text>
</comment>
<evidence type="ECO:0000255" key="1">
    <source>
        <dbReference type="HAMAP-Rule" id="MF_01040"/>
    </source>
</evidence>
<feature type="chain" id="PRO_1000064135" description="Probable phosphoglycerate mutase GpmB">
    <location>
        <begin position="1"/>
        <end position="215"/>
    </location>
</feature>
<feature type="active site" description="Tele-phosphohistidine intermediate" evidence="1">
    <location>
        <position position="9"/>
    </location>
</feature>
<feature type="active site" description="Proton donor/acceptor" evidence="1">
    <location>
        <position position="82"/>
    </location>
</feature>
<feature type="binding site" evidence="1">
    <location>
        <begin position="8"/>
        <end position="15"/>
    </location>
    <ligand>
        <name>substrate</name>
    </ligand>
</feature>
<feature type="binding site" evidence="1">
    <location>
        <begin position="21"/>
        <end position="22"/>
    </location>
    <ligand>
        <name>substrate</name>
    </ligand>
</feature>
<feature type="binding site" evidence="1">
    <location>
        <position position="58"/>
    </location>
    <ligand>
        <name>substrate</name>
    </ligand>
</feature>
<feature type="binding site" evidence="1">
    <location>
        <begin position="82"/>
        <end position="85"/>
    </location>
    <ligand>
        <name>substrate</name>
    </ligand>
</feature>
<feature type="binding site" evidence="1">
    <location>
        <begin position="151"/>
        <end position="152"/>
    </location>
    <ligand>
        <name>substrate</name>
    </ligand>
</feature>
<feature type="site" description="Transition state stabilizer" evidence="1">
    <location>
        <position position="150"/>
    </location>
</feature>
<name>GPMB_YERP3</name>
<sequence>MLQVYLVRHGETLWNAARRIQGQSDSPLTEIGIRQAHLVAQRVRNQGITHIISSDLGRTQQTAKIIADACGLTMVTDPRLRELNMGVLENRPIDSLTPEEEQWRKQMVNGTEGARIPEGESMTELGRRMHAALDSCLELPAGSKPLLVSHGMALGCLLSTLLGLPAHAERRLRLRNCSLSRVDYQESPWLASGWVIESAGDTAHLDMPALDELQR</sequence>
<proteinExistence type="inferred from homology"/>
<reference key="1">
    <citation type="journal article" date="2007" name="PLoS Genet.">
        <title>The complete genome sequence of Yersinia pseudotuberculosis IP31758, the causative agent of Far East scarlet-like fever.</title>
        <authorList>
            <person name="Eppinger M."/>
            <person name="Rosovitz M.J."/>
            <person name="Fricke W.F."/>
            <person name="Rasko D.A."/>
            <person name="Kokorina G."/>
            <person name="Fayolle C."/>
            <person name="Lindler L.E."/>
            <person name="Carniel E."/>
            <person name="Ravel J."/>
        </authorList>
    </citation>
    <scope>NUCLEOTIDE SEQUENCE [LARGE SCALE GENOMIC DNA]</scope>
    <source>
        <strain>IP 31758</strain>
    </source>
</reference>
<dbReference type="EC" id="5.4.2.-" evidence="1"/>
<dbReference type="EMBL" id="CP000720">
    <property type="protein sequence ID" value="ABS49234.1"/>
    <property type="molecule type" value="Genomic_DNA"/>
</dbReference>
<dbReference type="RefSeq" id="WP_002209230.1">
    <property type="nucleotide sequence ID" value="NC_009708.1"/>
</dbReference>
<dbReference type="SMR" id="A7FMF8"/>
<dbReference type="GeneID" id="57974154"/>
<dbReference type="KEGG" id="ypi:YpsIP31758_3480"/>
<dbReference type="HOGENOM" id="CLU_033323_9_5_6"/>
<dbReference type="UniPathway" id="UPA00109">
    <property type="reaction ID" value="UER00186"/>
</dbReference>
<dbReference type="Proteomes" id="UP000002412">
    <property type="component" value="Chromosome"/>
</dbReference>
<dbReference type="GO" id="GO:0005737">
    <property type="term" value="C:cytoplasm"/>
    <property type="evidence" value="ECO:0007669"/>
    <property type="project" value="TreeGrafter"/>
</dbReference>
<dbReference type="GO" id="GO:0016791">
    <property type="term" value="F:phosphatase activity"/>
    <property type="evidence" value="ECO:0007669"/>
    <property type="project" value="TreeGrafter"/>
</dbReference>
<dbReference type="GO" id="GO:0004619">
    <property type="term" value="F:phosphoglycerate mutase activity"/>
    <property type="evidence" value="ECO:0007669"/>
    <property type="project" value="UniProtKB-UniRule"/>
</dbReference>
<dbReference type="GO" id="GO:0006096">
    <property type="term" value="P:glycolytic process"/>
    <property type="evidence" value="ECO:0007669"/>
    <property type="project" value="UniProtKB-UniRule"/>
</dbReference>
<dbReference type="CDD" id="cd07067">
    <property type="entry name" value="HP_PGM_like"/>
    <property type="match status" value="1"/>
</dbReference>
<dbReference type="Gene3D" id="3.40.50.1240">
    <property type="entry name" value="Phosphoglycerate mutase-like"/>
    <property type="match status" value="1"/>
</dbReference>
<dbReference type="HAMAP" id="MF_01040">
    <property type="entry name" value="PGAM_GpmB"/>
    <property type="match status" value="1"/>
</dbReference>
<dbReference type="InterPro" id="IPR013078">
    <property type="entry name" value="His_Pase_superF_clade-1"/>
</dbReference>
<dbReference type="InterPro" id="IPR029033">
    <property type="entry name" value="His_PPase_superfam"/>
</dbReference>
<dbReference type="InterPro" id="IPR001345">
    <property type="entry name" value="PG/BPGM_mutase_AS"/>
</dbReference>
<dbReference type="InterPro" id="IPR050275">
    <property type="entry name" value="PGM_Phosphatase"/>
</dbReference>
<dbReference type="InterPro" id="IPR023086">
    <property type="entry name" value="Phosphoglycerate_mutase_GpmB"/>
</dbReference>
<dbReference type="NCBIfam" id="NF002901">
    <property type="entry name" value="PRK03482.1"/>
    <property type="match status" value="1"/>
</dbReference>
<dbReference type="PANTHER" id="PTHR48100">
    <property type="entry name" value="BROAD-SPECIFICITY PHOSPHATASE YOR283W-RELATED"/>
    <property type="match status" value="1"/>
</dbReference>
<dbReference type="PANTHER" id="PTHR48100:SF1">
    <property type="entry name" value="HISTIDINE PHOSPHATASE FAMILY PROTEIN-RELATED"/>
    <property type="match status" value="1"/>
</dbReference>
<dbReference type="Pfam" id="PF00300">
    <property type="entry name" value="His_Phos_1"/>
    <property type="match status" value="1"/>
</dbReference>
<dbReference type="SMART" id="SM00855">
    <property type="entry name" value="PGAM"/>
    <property type="match status" value="1"/>
</dbReference>
<dbReference type="SUPFAM" id="SSF53254">
    <property type="entry name" value="Phosphoglycerate mutase-like"/>
    <property type="match status" value="1"/>
</dbReference>
<dbReference type="PROSITE" id="PS00175">
    <property type="entry name" value="PG_MUTASE"/>
    <property type="match status" value="1"/>
</dbReference>
<organism>
    <name type="scientific">Yersinia pseudotuberculosis serotype O:1b (strain IP 31758)</name>
    <dbReference type="NCBI Taxonomy" id="349747"/>
    <lineage>
        <taxon>Bacteria</taxon>
        <taxon>Pseudomonadati</taxon>
        <taxon>Pseudomonadota</taxon>
        <taxon>Gammaproteobacteria</taxon>
        <taxon>Enterobacterales</taxon>
        <taxon>Yersiniaceae</taxon>
        <taxon>Yersinia</taxon>
    </lineage>
</organism>
<keyword id="KW-0324">Glycolysis</keyword>
<keyword id="KW-0413">Isomerase</keyword>